<proteinExistence type="inferred from homology"/>
<dbReference type="EC" id="3.4.21.88" evidence="1"/>
<dbReference type="EMBL" id="AP008955">
    <property type="protein sequence ID" value="BAH44285.1"/>
    <property type="molecule type" value="Genomic_DNA"/>
</dbReference>
<dbReference type="RefSeq" id="WP_007718939.1">
    <property type="nucleotide sequence ID" value="NC_012491.1"/>
</dbReference>
<dbReference type="SMR" id="C0ZES6"/>
<dbReference type="STRING" id="358681.BBR47_33080"/>
<dbReference type="MEROPS" id="S24.001"/>
<dbReference type="GeneID" id="95749280"/>
<dbReference type="KEGG" id="bbe:BBR47_33080"/>
<dbReference type="eggNOG" id="COG1974">
    <property type="taxonomic scope" value="Bacteria"/>
</dbReference>
<dbReference type="HOGENOM" id="CLU_066192_45_1_9"/>
<dbReference type="Proteomes" id="UP000001877">
    <property type="component" value="Chromosome"/>
</dbReference>
<dbReference type="GO" id="GO:0003677">
    <property type="term" value="F:DNA binding"/>
    <property type="evidence" value="ECO:0007669"/>
    <property type="project" value="UniProtKB-UniRule"/>
</dbReference>
<dbReference type="GO" id="GO:0004252">
    <property type="term" value="F:serine-type endopeptidase activity"/>
    <property type="evidence" value="ECO:0007669"/>
    <property type="project" value="UniProtKB-UniRule"/>
</dbReference>
<dbReference type="GO" id="GO:0006281">
    <property type="term" value="P:DNA repair"/>
    <property type="evidence" value="ECO:0007669"/>
    <property type="project" value="UniProtKB-UniRule"/>
</dbReference>
<dbReference type="GO" id="GO:0006260">
    <property type="term" value="P:DNA replication"/>
    <property type="evidence" value="ECO:0007669"/>
    <property type="project" value="UniProtKB-UniRule"/>
</dbReference>
<dbReference type="GO" id="GO:0045892">
    <property type="term" value="P:negative regulation of DNA-templated transcription"/>
    <property type="evidence" value="ECO:0007669"/>
    <property type="project" value="UniProtKB-UniRule"/>
</dbReference>
<dbReference type="GO" id="GO:0006508">
    <property type="term" value="P:proteolysis"/>
    <property type="evidence" value="ECO:0007669"/>
    <property type="project" value="InterPro"/>
</dbReference>
<dbReference type="GO" id="GO:0009432">
    <property type="term" value="P:SOS response"/>
    <property type="evidence" value="ECO:0007669"/>
    <property type="project" value="UniProtKB-UniRule"/>
</dbReference>
<dbReference type="CDD" id="cd00090">
    <property type="entry name" value="HTH_ARSR"/>
    <property type="match status" value="1"/>
</dbReference>
<dbReference type="CDD" id="cd06529">
    <property type="entry name" value="S24_LexA-like"/>
    <property type="match status" value="1"/>
</dbReference>
<dbReference type="FunFam" id="1.10.10.10:FF:000009">
    <property type="entry name" value="LexA repressor"/>
    <property type="match status" value="1"/>
</dbReference>
<dbReference type="FunFam" id="2.10.109.10:FF:000001">
    <property type="entry name" value="LexA repressor"/>
    <property type="match status" value="1"/>
</dbReference>
<dbReference type="Gene3D" id="2.10.109.10">
    <property type="entry name" value="Umud Fragment, subunit A"/>
    <property type="match status" value="1"/>
</dbReference>
<dbReference type="Gene3D" id="1.10.10.10">
    <property type="entry name" value="Winged helix-like DNA-binding domain superfamily/Winged helix DNA-binding domain"/>
    <property type="match status" value="1"/>
</dbReference>
<dbReference type="HAMAP" id="MF_00015">
    <property type="entry name" value="LexA"/>
    <property type="match status" value="1"/>
</dbReference>
<dbReference type="InterPro" id="IPR011991">
    <property type="entry name" value="ArsR-like_HTH"/>
</dbReference>
<dbReference type="InterPro" id="IPR006200">
    <property type="entry name" value="LexA"/>
</dbReference>
<dbReference type="InterPro" id="IPR039418">
    <property type="entry name" value="LexA-like"/>
</dbReference>
<dbReference type="InterPro" id="IPR036286">
    <property type="entry name" value="LexA/Signal_pep-like_sf"/>
</dbReference>
<dbReference type="InterPro" id="IPR006199">
    <property type="entry name" value="LexA_DNA-bd_dom"/>
</dbReference>
<dbReference type="InterPro" id="IPR050077">
    <property type="entry name" value="LexA_repressor"/>
</dbReference>
<dbReference type="InterPro" id="IPR006197">
    <property type="entry name" value="Peptidase_S24_LexA"/>
</dbReference>
<dbReference type="InterPro" id="IPR015927">
    <property type="entry name" value="Peptidase_S24_S26A/B/C"/>
</dbReference>
<dbReference type="InterPro" id="IPR036388">
    <property type="entry name" value="WH-like_DNA-bd_sf"/>
</dbReference>
<dbReference type="InterPro" id="IPR036390">
    <property type="entry name" value="WH_DNA-bd_sf"/>
</dbReference>
<dbReference type="NCBIfam" id="TIGR00498">
    <property type="entry name" value="lexA"/>
    <property type="match status" value="1"/>
</dbReference>
<dbReference type="PANTHER" id="PTHR33516">
    <property type="entry name" value="LEXA REPRESSOR"/>
    <property type="match status" value="1"/>
</dbReference>
<dbReference type="PANTHER" id="PTHR33516:SF2">
    <property type="entry name" value="LEXA REPRESSOR-RELATED"/>
    <property type="match status" value="1"/>
</dbReference>
<dbReference type="Pfam" id="PF01726">
    <property type="entry name" value="LexA_DNA_bind"/>
    <property type="match status" value="1"/>
</dbReference>
<dbReference type="Pfam" id="PF00717">
    <property type="entry name" value="Peptidase_S24"/>
    <property type="match status" value="1"/>
</dbReference>
<dbReference type="PRINTS" id="PR00726">
    <property type="entry name" value="LEXASERPTASE"/>
</dbReference>
<dbReference type="SUPFAM" id="SSF51306">
    <property type="entry name" value="LexA/Signal peptidase"/>
    <property type="match status" value="1"/>
</dbReference>
<dbReference type="SUPFAM" id="SSF46785">
    <property type="entry name" value="Winged helix' DNA-binding domain"/>
    <property type="match status" value="1"/>
</dbReference>
<reference key="1">
    <citation type="submission" date="2005-03" db="EMBL/GenBank/DDBJ databases">
        <title>Brevibacillus brevis strain 47, complete genome.</title>
        <authorList>
            <person name="Hosoyama A."/>
            <person name="Yamada R."/>
            <person name="Hongo Y."/>
            <person name="Terui Y."/>
            <person name="Ankai A."/>
            <person name="Masuyama W."/>
            <person name="Sekiguchi M."/>
            <person name="Takeda T."/>
            <person name="Asano K."/>
            <person name="Ohji S."/>
            <person name="Ichikawa N."/>
            <person name="Narita S."/>
            <person name="Aoki N."/>
            <person name="Miura H."/>
            <person name="Matsushita S."/>
            <person name="Sekigawa T."/>
            <person name="Yamagata H."/>
            <person name="Yoshikawa H."/>
            <person name="Udaka S."/>
            <person name="Tanikawa S."/>
            <person name="Fujita N."/>
        </authorList>
    </citation>
    <scope>NUCLEOTIDE SEQUENCE [LARGE SCALE GENOMIC DNA]</scope>
    <source>
        <strain>47 / JCM 6285 / NBRC 100599</strain>
    </source>
</reference>
<sequence length="207" mass="23291">MSKLSSRQQAIIEFIRKEVRDKGYPPSVREIGEAVGLASSSTVHGHLARLEKKGLIRRDPTKPRAIELLSDEDRFQDNFEDSVVRVPVIGKVTAGQPITAIEDVEEYFPLPDNIVTSDKVYMLRVSGNSMIDAGILDGDYVIVRQQHVANNGDIVVAMTEEDEATVKRFFKEKNHFRLQPENATMEPIILEHVTILGKVIGVYRLIH</sequence>
<protein>
    <recommendedName>
        <fullName evidence="1">LexA repressor</fullName>
        <ecNumber evidence="1">3.4.21.88</ecNumber>
    </recommendedName>
</protein>
<evidence type="ECO:0000255" key="1">
    <source>
        <dbReference type="HAMAP-Rule" id="MF_00015"/>
    </source>
</evidence>
<keyword id="KW-0068">Autocatalytic cleavage</keyword>
<keyword id="KW-0227">DNA damage</keyword>
<keyword id="KW-0234">DNA repair</keyword>
<keyword id="KW-0235">DNA replication</keyword>
<keyword id="KW-0238">DNA-binding</keyword>
<keyword id="KW-0378">Hydrolase</keyword>
<keyword id="KW-1185">Reference proteome</keyword>
<keyword id="KW-0678">Repressor</keyword>
<keyword id="KW-0742">SOS response</keyword>
<keyword id="KW-0804">Transcription</keyword>
<keyword id="KW-0805">Transcription regulation</keyword>
<accession>C0ZES6</accession>
<organism>
    <name type="scientific">Brevibacillus brevis (strain 47 / JCM 6285 / NBRC 100599)</name>
    <dbReference type="NCBI Taxonomy" id="358681"/>
    <lineage>
        <taxon>Bacteria</taxon>
        <taxon>Bacillati</taxon>
        <taxon>Bacillota</taxon>
        <taxon>Bacilli</taxon>
        <taxon>Bacillales</taxon>
        <taxon>Paenibacillaceae</taxon>
        <taxon>Brevibacillus</taxon>
    </lineage>
</organism>
<comment type="function">
    <text evidence="1">Represses a number of genes involved in the response to DNA damage (SOS response), including recA and lexA. In the presence of single-stranded DNA, RecA interacts with LexA causing an autocatalytic cleavage which disrupts the DNA-binding part of LexA, leading to derepression of the SOS regulon and eventually DNA repair.</text>
</comment>
<comment type="catalytic activity">
    <reaction evidence="1">
        <text>Hydrolysis of Ala-|-Gly bond in repressor LexA.</text>
        <dbReference type="EC" id="3.4.21.88"/>
    </reaction>
</comment>
<comment type="subunit">
    <text evidence="1">Homodimer.</text>
</comment>
<comment type="similarity">
    <text evidence="1">Belongs to the peptidase S24 family.</text>
</comment>
<feature type="chain" id="PRO_1000116597" description="LexA repressor">
    <location>
        <begin position="1"/>
        <end position="207"/>
    </location>
</feature>
<feature type="DNA-binding region" description="H-T-H motif" evidence="1">
    <location>
        <begin position="28"/>
        <end position="48"/>
    </location>
</feature>
<feature type="active site" description="For autocatalytic cleavage activity" evidence="1">
    <location>
        <position position="129"/>
    </location>
</feature>
<feature type="active site" description="For autocatalytic cleavage activity" evidence="1">
    <location>
        <position position="167"/>
    </location>
</feature>
<feature type="site" description="Cleavage; by autolysis" evidence="1">
    <location>
        <begin position="94"/>
        <end position="95"/>
    </location>
</feature>
<gene>
    <name evidence="1" type="primary">lexA</name>
    <name type="ordered locus">BBR47_33080</name>
</gene>
<name>LEXA_BREBN</name>